<organism>
    <name type="scientific">Plasmodium berghei</name>
    <dbReference type="NCBI Taxonomy" id="5821"/>
    <lineage>
        <taxon>Eukaryota</taxon>
        <taxon>Sar</taxon>
        <taxon>Alveolata</taxon>
        <taxon>Apicomplexa</taxon>
        <taxon>Aconoidasida</taxon>
        <taxon>Haemosporida</taxon>
        <taxon>Plasmodiidae</taxon>
        <taxon>Plasmodium</taxon>
        <taxon>Plasmodium (Vinckeia)</taxon>
    </lineage>
</organism>
<proteinExistence type="evidence at protein level"/>
<accession>Q08168</accession>
<evidence type="ECO:0000256" key="1">
    <source>
        <dbReference type="SAM" id="MobiDB-lite"/>
    </source>
</evidence>
<evidence type="ECO:0000269" key="2">
    <source>
    </source>
</evidence>
<evidence type="ECO:0000305" key="3"/>
<keyword id="KW-0143">Chaperone</keyword>
<keyword id="KW-0963">Cytoplasm</keyword>
<keyword id="KW-0677">Repeat</keyword>
<keyword id="KW-0802">TPR repeat</keyword>
<reference key="1">
    <citation type="journal article" date="1993" name="Mol. Biochem. Parasitol.">
        <title>Molecular cloning and localization of an abundant novel protein of Plasmodium berghei.</title>
        <authorList>
            <person name="Uparanukraw P."/>
            <person name="Toyoshima T."/>
            <person name="Aikawa M."/>
            <person name="Kumar N."/>
        </authorList>
    </citation>
    <scope>NUCLEOTIDE SEQUENCE [GENOMIC DNA] OF 7-423</scope>
    <source>
        <strain>ANKA</strain>
    </source>
</reference>
<reference key="2">
    <citation type="submission" date="1993-07" db="EMBL/GenBank/DDBJ databases">
        <authorList>
            <person name="Wiser M.F."/>
        </authorList>
    </citation>
    <scope>NUCLEOTIDE SEQUENCE OF 1-248</scope>
    <source>
        <strain>ANKA / HP 8417</strain>
    </source>
</reference>
<reference key="3">
    <citation type="journal article" date="1996" name="Mol. Biochem. Parasitol.">
        <title>Further characterization of a 58 kDa Plasmodium berghei phosphoprotein as a cochaperone.</title>
        <authorList>
            <person name="Wiser M.F."/>
            <person name="Jennings G.J."/>
            <person name="Uparanukraw P."/>
            <person name="van Belkum A."/>
            <person name="van Doorn L.J."/>
            <person name="Kumar N."/>
        </authorList>
    </citation>
    <scope>CHARACTERIZATION</scope>
    <scope>SUBCELLULAR LOCATION</scope>
</reference>
<comment type="function">
    <text>May play a role in protein folding or protein-protein interactions. May act as a co-chaperone.</text>
</comment>
<comment type="subcellular location">
    <subcellularLocation>
        <location evidence="2">Cytoplasm</location>
    </subcellularLocation>
</comment>
<comment type="developmental stage">
    <text>Present in all the different life cycle stages.</text>
</comment>
<comment type="sequence caution" evidence="3">
    <conflict type="erroneous initiation">
        <sequence resource="EMBL-CDS" id="AAC37293"/>
    </conflict>
</comment>
<sequence length="423" mass="47759">MDIEKIEDLKKFVASCEENPSILLKPELSFFKDFIESFGGKIKKDKMGYEKMKSEDSTEEKSDEEEEDEEEEEEEEEDDDPEKLELIKEEAVECPPLAPIIEGELSEEQIEEICKLKEEAVDLVENKKYEEALEKYNKIISFGNPSAMIYTKRASILLNLKRPKACIRDCTEALNLNVDSANAYKIRAKAYRYLGKWEFAHADMEQGQKIDYDENLWDMQKLIQEKYKKIYEKRRYKINKEEEKQRLKREKELKKKLAAKKKAEKMYKENNKRENYDSDSSDSSYSEPDFSGDFPGGMPGGMPGMPGGMGGMGGMPGMPGGFPGMPGGMPGGMPGGMGGMPGMPGGMPGGMGGMPGMPGGMPDLNSPEMKELFNNPQFFQMMQNMMSNPDLINKYASDPKYKNIFENLKNSDLGGMMGEKPKP</sequence>
<dbReference type="EMBL" id="L04508">
    <property type="protein sequence ID" value="AAC37293.1"/>
    <property type="status" value="ALT_INIT"/>
    <property type="molecule type" value="Genomic_DNA"/>
</dbReference>
<dbReference type="EMBL" id="L21710">
    <property type="protein sequence ID" value="AAC37300.1"/>
    <property type="molecule type" value="mRNA"/>
</dbReference>
<dbReference type="PIR" id="T10455">
    <property type="entry name" value="T10455"/>
</dbReference>
<dbReference type="SMR" id="Q08168"/>
<dbReference type="VEuPathDB" id="PlasmoDB:PBANKA_1242300"/>
<dbReference type="GO" id="GO:0005737">
    <property type="term" value="C:cytoplasm"/>
    <property type="evidence" value="ECO:0007669"/>
    <property type="project" value="UniProtKB-SubCell"/>
</dbReference>
<dbReference type="GO" id="GO:0030544">
    <property type="term" value="F:Hsp70 protein binding"/>
    <property type="evidence" value="ECO:0007669"/>
    <property type="project" value="TreeGrafter"/>
</dbReference>
<dbReference type="GO" id="GO:0046983">
    <property type="term" value="F:protein dimerization activity"/>
    <property type="evidence" value="ECO:0007669"/>
    <property type="project" value="InterPro"/>
</dbReference>
<dbReference type="GO" id="GO:0051085">
    <property type="term" value="P:chaperone cofactor-dependent protein refolding"/>
    <property type="evidence" value="ECO:0007669"/>
    <property type="project" value="TreeGrafter"/>
</dbReference>
<dbReference type="CDD" id="cd14438">
    <property type="entry name" value="Hip_N"/>
    <property type="match status" value="1"/>
</dbReference>
<dbReference type="FunFam" id="6.10.250.3420:FF:000001">
    <property type="entry name" value="Hsc70-interacting protein-like protein"/>
    <property type="match status" value="1"/>
</dbReference>
<dbReference type="Gene3D" id="1.10.260.100">
    <property type="match status" value="1"/>
</dbReference>
<dbReference type="Gene3D" id="6.10.250.3420">
    <property type="match status" value="1"/>
</dbReference>
<dbReference type="Gene3D" id="1.25.40.10">
    <property type="entry name" value="Tetratricopeptide repeat domain"/>
    <property type="match status" value="1"/>
</dbReference>
<dbReference type="InterPro" id="IPR034649">
    <property type="entry name" value="Hip_N"/>
</dbReference>
<dbReference type="InterPro" id="IPR006636">
    <property type="entry name" value="STI1_HS-bd"/>
</dbReference>
<dbReference type="InterPro" id="IPR011990">
    <property type="entry name" value="TPR-like_helical_dom_sf"/>
</dbReference>
<dbReference type="InterPro" id="IPR019734">
    <property type="entry name" value="TPR_rpt"/>
</dbReference>
<dbReference type="PANTHER" id="PTHR45883">
    <property type="entry name" value="HSC70-INTERACTING PROTEIN"/>
    <property type="match status" value="1"/>
</dbReference>
<dbReference type="PANTHER" id="PTHR45883:SF2">
    <property type="entry name" value="HSC70-INTERACTING PROTEIN"/>
    <property type="match status" value="1"/>
</dbReference>
<dbReference type="Pfam" id="PF18253">
    <property type="entry name" value="HipN"/>
    <property type="match status" value="1"/>
</dbReference>
<dbReference type="SMART" id="SM00727">
    <property type="entry name" value="STI1"/>
    <property type="match status" value="1"/>
</dbReference>
<dbReference type="SMART" id="SM00028">
    <property type="entry name" value="TPR"/>
    <property type="match status" value="2"/>
</dbReference>
<dbReference type="SUPFAM" id="SSF48452">
    <property type="entry name" value="TPR-like"/>
    <property type="match status" value="1"/>
</dbReference>
<dbReference type="PROSITE" id="PS50293">
    <property type="entry name" value="TPR_REGION"/>
    <property type="match status" value="1"/>
</dbReference>
<name>HRP_PLABE</name>
<feature type="chain" id="PRO_0000106343" description="58 kDa phosphoprotein">
    <location>
        <begin position="1"/>
        <end position="423"/>
    </location>
</feature>
<feature type="repeat" description="TPR 1">
    <location>
        <begin position="113"/>
        <end position="146"/>
    </location>
</feature>
<feature type="repeat" description="TPR 2">
    <location>
        <begin position="147"/>
        <end position="180"/>
    </location>
</feature>
<feature type="repeat" description="TPR 3">
    <location>
        <begin position="181"/>
        <end position="214"/>
    </location>
</feature>
<feature type="domain" description="STI1">
    <location>
        <begin position="361"/>
        <end position="423"/>
    </location>
</feature>
<feature type="region of interest" description="Disordered" evidence="1">
    <location>
        <begin position="46"/>
        <end position="82"/>
    </location>
</feature>
<feature type="region of interest" description="Disordered" evidence="1">
    <location>
        <begin position="260"/>
        <end position="301"/>
    </location>
</feature>
<feature type="region of interest" description="19 X 3-4 AA approximate repeats">
    <location>
        <begin position="292"/>
        <end position="362"/>
    </location>
</feature>
<feature type="compositionally biased region" description="Basic and acidic residues" evidence="1">
    <location>
        <begin position="46"/>
        <end position="60"/>
    </location>
</feature>
<feature type="compositionally biased region" description="Acidic residues" evidence="1">
    <location>
        <begin position="61"/>
        <end position="82"/>
    </location>
</feature>
<feature type="compositionally biased region" description="Basic and acidic residues" evidence="1">
    <location>
        <begin position="264"/>
        <end position="276"/>
    </location>
</feature>
<feature type="sequence conflict" description="In Ref. 1." evidence="3" ref="1">
    <original>K</original>
    <variation>G</variation>
    <location>
        <position position="25"/>
    </location>
</feature>
<feature type="sequence conflict" description="In Ref. 1; AAC37293." evidence="3" ref="1">
    <location>
        <position position="77"/>
    </location>
</feature>
<protein>
    <recommendedName>
        <fullName>58 kDa phosphoprotein</fullName>
    </recommendedName>
    <alternativeName>
        <fullName>Heat shock-related protein</fullName>
        <shortName>HRP</shortName>
    </alternativeName>
</protein>